<keyword id="KW-0067">ATP-binding</keyword>
<keyword id="KW-0963">Cytoplasm</keyword>
<keyword id="KW-0436">Ligase</keyword>
<keyword id="KW-0547">Nucleotide-binding</keyword>
<keyword id="KW-0566">Pantothenate biosynthesis</keyword>
<keyword id="KW-1185">Reference proteome</keyword>
<dbReference type="EC" id="6.3.2.1" evidence="1"/>
<dbReference type="EMBL" id="CP001145">
    <property type="protein sequence ID" value="ACI18189.1"/>
    <property type="molecule type" value="Genomic_DNA"/>
</dbReference>
<dbReference type="RefSeq" id="WP_012544839.1">
    <property type="nucleotide sequence ID" value="NC_011295.1"/>
</dbReference>
<dbReference type="SMR" id="B5Y863"/>
<dbReference type="STRING" id="309798.COPRO5265_0605"/>
<dbReference type="KEGG" id="cpo:COPRO5265_0605"/>
<dbReference type="eggNOG" id="COG0414">
    <property type="taxonomic scope" value="Bacteria"/>
</dbReference>
<dbReference type="HOGENOM" id="CLU_047148_0_0_9"/>
<dbReference type="OrthoDB" id="9773087at2"/>
<dbReference type="UniPathway" id="UPA00028">
    <property type="reaction ID" value="UER00005"/>
</dbReference>
<dbReference type="Proteomes" id="UP000001732">
    <property type="component" value="Chromosome"/>
</dbReference>
<dbReference type="GO" id="GO:0005829">
    <property type="term" value="C:cytosol"/>
    <property type="evidence" value="ECO:0007669"/>
    <property type="project" value="TreeGrafter"/>
</dbReference>
<dbReference type="GO" id="GO:0005524">
    <property type="term" value="F:ATP binding"/>
    <property type="evidence" value="ECO:0007669"/>
    <property type="project" value="UniProtKB-KW"/>
</dbReference>
<dbReference type="GO" id="GO:0004592">
    <property type="term" value="F:pantoate-beta-alanine ligase activity"/>
    <property type="evidence" value="ECO:0007669"/>
    <property type="project" value="UniProtKB-UniRule"/>
</dbReference>
<dbReference type="GO" id="GO:0015940">
    <property type="term" value="P:pantothenate biosynthetic process"/>
    <property type="evidence" value="ECO:0007669"/>
    <property type="project" value="UniProtKB-UniRule"/>
</dbReference>
<dbReference type="CDD" id="cd00560">
    <property type="entry name" value="PanC"/>
    <property type="match status" value="1"/>
</dbReference>
<dbReference type="FunFam" id="3.40.50.620:FF:000013">
    <property type="entry name" value="Pantothenate synthetase"/>
    <property type="match status" value="1"/>
</dbReference>
<dbReference type="Gene3D" id="3.40.50.620">
    <property type="entry name" value="HUPs"/>
    <property type="match status" value="1"/>
</dbReference>
<dbReference type="Gene3D" id="3.30.1300.10">
    <property type="entry name" value="Pantoate-beta-alanine ligase, C-terminal domain"/>
    <property type="match status" value="1"/>
</dbReference>
<dbReference type="HAMAP" id="MF_00158">
    <property type="entry name" value="PanC"/>
    <property type="match status" value="1"/>
</dbReference>
<dbReference type="InterPro" id="IPR004821">
    <property type="entry name" value="Cyt_trans-like"/>
</dbReference>
<dbReference type="InterPro" id="IPR003721">
    <property type="entry name" value="Pantoate_ligase"/>
</dbReference>
<dbReference type="InterPro" id="IPR042176">
    <property type="entry name" value="Pantoate_ligase_C"/>
</dbReference>
<dbReference type="InterPro" id="IPR014729">
    <property type="entry name" value="Rossmann-like_a/b/a_fold"/>
</dbReference>
<dbReference type="NCBIfam" id="TIGR00125">
    <property type="entry name" value="cyt_tran_rel"/>
    <property type="match status" value="1"/>
</dbReference>
<dbReference type="NCBIfam" id="TIGR00018">
    <property type="entry name" value="panC"/>
    <property type="match status" value="1"/>
</dbReference>
<dbReference type="PANTHER" id="PTHR21299">
    <property type="entry name" value="CYTIDYLATE KINASE/PANTOATE-BETA-ALANINE LIGASE"/>
    <property type="match status" value="1"/>
</dbReference>
<dbReference type="PANTHER" id="PTHR21299:SF1">
    <property type="entry name" value="PANTOATE--BETA-ALANINE LIGASE"/>
    <property type="match status" value="1"/>
</dbReference>
<dbReference type="Pfam" id="PF02569">
    <property type="entry name" value="Pantoate_ligase"/>
    <property type="match status" value="1"/>
</dbReference>
<dbReference type="SUPFAM" id="SSF52374">
    <property type="entry name" value="Nucleotidylyl transferase"/>
    <property type="match status" value="1"/>
</dbReference>
<evidence type="ECO:0000255" key="1">
    <source>
        <dbReference type="HAMAP-Rule" id="MF_00158"/>
    </source>
</evidence>
<comment type="function">
    <text evidence="1">Catalyzes the condensation of pantoate with beta-alanine in an ATP-dependent reaction via a pantoyl-adenylate intermediate.</text>
</comment>
<comment type="catalytic activity">
    <reaction evidence="1">
        <text>(R)-pantoate + beta-alanine + ATP = (R)-pantothenate + AMP + diphosphate + H(+)</text>
        <dbReference type="Rhea" id="RHEA:10912"/>
        <dbReference type="ChEBI" id="CHEBI:15378"/>
        <dbReference type="ChEBI" id="CHEBI:15980"/>
        <dbReference type="ChEBI" id="CHEBI:29032"/>
        <dbReference type="ChEBI" id="CHEBI:30616"/>
        <dbReference type="ChEBI" id="CHEBI:33019"/>
        <dbReference type="ChEBI" id="CHEBI:57966"/>
        <dbReference type="ChEBI" id="CHEBI:456215"/>
        <dbReference type="EC" id="6.3.2.1"/>
    </reaction>
</comment>
<comment type="pathway">
    <text evidence="1">Cofactor biosynthesis; (R)-pantothenate biosynthesis; (R)-pantothenate from (R)-pantoate and beta-alanine: step 1/1.</text>
</comment>
<comment type="subunit">
    <text evidence="1">Homodimer.</text>
</comment>
<comment type="subcellular location">
    <subcellularLocation>
        <location evidence="1">Cytoplasm</location>
    </subcellularLocation>
</comment>
<comment type="miscellaneous">
    <text evidence="1">The reaction proceeds by a bi uni uni bi ping pong mechanism.</text>
</comment>
<comment type="similarity">
    <text evidence="1">Belongs to the pantothenate synthetase family.</text>
</comment>
<name>PANC_COPPD</name>
<sequence>MEIVRDIKTMREKVAEMKRQGKSVGLVPTMGYLHEGHLALIDTARKENDVVVVSDFVNPLQFGPNEDYLVYPRDMDRDAQLCSEHGVDFLFVPTVEEMYPKKGNQVDVFVDVKHLDENLCGRFRPGHFRGVVTVVTKLFNIVSPNRAYFGMKDIQQLRIIEEMVNDLNMNIEIVPVPTVREPSGLALSSRNTYLSAEEREKAASIYKSLLMAKDLILEKGVISTAEVIGTCTRFLSQQGFKVQYFQLVDYDTLELLPKIEPPQKIIIATAVFLGKVRLIDNLVIEVR</sequence>
<protein>
    <recommendedName>
        <fullName evidence="1">Pantothenate synthetase</fullName>
        <shortName evidence="1">PS</shortName>
        <ecNumber evidence="1">6.3.2.1</ecNumber>
    </recommendedName>
    <alternativeName>
        <fullName evidence="1">Pantoate--beta-alanine ligase</fullName>
    </alternativeName>
    <alternativeName>
        <fullName evidence="1">Pantoate-activating enzyme</fullName>
    </alternativeName>
</protein>
<proteinExistence type="inferred from homology"/>
<gene>
    <name evidence="1" type="primary">panC</name>
    <name type="ordered locus">COPRO5265_0605</name>
</gene>
<reference key="1">
    <citation type="submission" date="2008-08" db="EMBL/GenBank/DDBJ databases">
        <title>The complete genome sequence of Coprothermobacter proteolyticus strain ATCC 5245 / DSM 5265 / BT.</title>
        <authorList>
            <person name="Dodson R.J."/>
            <person name="Durkin A.S."/>
            <person name="Wu M."/>
            <person name="Eisen J."/>
            <person name="Sutton G."/>
        </authorList>
    </citation>
    <scope>NUCLEOTIDE SEQUENCE [LARGE SCALE GENOMIC DNA]</scope>
    <source>
        <strain>ATCC 35245 / DSM 5265 / OCM 4 / BT</strain>
    </source>
</reference>
<accession>B5Y863</accession>
<organism>
    <name type="scientific">Coprothermobacter proteolyticus (strain ATCC 35245 / DSM 5265 / OCM 4 / BT)</name>
    <dbReference type="NCBI Taxonomy" id="309798"/>
    <lineage>
        <taxon>Bacteria</taxon>
        <taxon>Pseudomonadati</taxon>
        <taxon>Coprothermobacterota</taxon>
        <taxon>Coprothermobacteria</taxon>
        <taxon>Coprothermobacterales</taxon>
        <taxon>Coprothermobacteraceae</taxon>
        <taxon>Coprothermobacter</taxon>
    </lineage>
</organism>
<feature type="chain" id="PRO_1000097052" description="Pantothenate synthetase">
    <location>
        <begin position="1"/>
        <end position="287"/>
    </location>
</feature>
<feature type="active site" description="Proton donor" evidence="1">
    <location>
        <position position="37"/>
    </location>
</feature>
<feature type="binding site" evidence="1">
    <location>
        <begin position="30"/>
        <end position="37"/>
    </location>
    <ligand>
        <name>ATP</name>
        <dbReference type="ChEBI" id="CHEBI:30616"/>
    </ligand>
</feature>
<feature type="binding site" evidence="1">
    <location>
        <position position="61"/>
    </location>
    <ligand>
        <name>(R)-pantoate</name>
        <dbReference type="ChEBI" id="CHEBI:15980"/>
    </ligand>
</feature>
<feature type="binding site" evidence="1">
    <location>
        <position position="61"/>
    </location>
    <ligand>
        <name>beta-alanine</name>
        <dbReference type="ChEBI" id="CHEBI:57966"/>
    </ligand>
</feature>
<feature type="binding site" evidence="1">
    <location>
        <begin position="150"/>
        <end position="153"/>
    </location>
    <ligand>
        <name>ATP</name>
        <dbReference type="ChEBI" id="CHEBI:30616"/>
    </ligand>
</feature>
<feature type="binding site" evidence="1">
    <location>
        <position position="156"/>
    </location>
    <ligand>
        <name>(R)-pantoate</name>
        <dbReference type="ChEBI" id="CHEBI:15980"/>
    </ligand>
</feature>
<feature type="binding site" evidence="1">
    <location>
        <position position="179"/>
    </location>
    <ligand>
        <name>ATP</name>
        <dbReference type="ChEBI" id="CHEBI:30616"/>
    </ligand>
</feature>
<feature type="binding site" evidence="1">
    <location>
        <begin position="187"/>
        <end position="190"/>
    </location>
    <ligand>
        <name>ATP</name>
        <dbReference type="ChEBI" id="CHEBI:30616"/>
    </ligand>
</feature>